<organism>
    <name type="scientific">Fowl adenovirus A serotype 1 (strain CELO / Phelps)</name>
    <name type="common">FAdV-1</name>
    <name type="synonym">Avian adenovirus gal1 (strain Phelps)</name>
    <dbReference type="NCBI Taxonomy" id="10553"/>
    <lineage>
        <taxon>Viruses</taxon>
        <taxon>Varidnaviria</taxon>
        <taxon>Bamfordvirae</taxon>
        <taxon>Preplasmiviricota</taxon>
        <taxon>Tectiliviricetes</taxon>
        <taxon>Rowavirales</taxon>
        <taxon>Adenoviridae</taxon>
        <taxon>Aviadenovirus</taxon>
        <taxon>Fowl aviadenovirus A</taxon>
    </lineage>
</organism>
<evidence type="ECO:0000256" key="1">
    <source>
        <dbReference type="SAM" id="MobiDB-lite"/>
    </source>
</evidence>
<reference key="1">
    <citation type="journal article" date="1996" name="J. Virol.">
        <title>The complete DNA sequence and genomic organization of the avian adenovirus CELO.</title>
        <authorList>
            <person name="Chiocca S."/>
            <person name="Kurzbauer R."/>
            <person name="Schaffner G."/>
            <person name="Baker A."/>
            <person name="Mautner V."/>
            <person name="Cotten M."/>
        </authorList>
    </citation>
    <scope>NUCLEOTIDE SEQUENCE [LARGE SCALE GENOMIC DNA]</scope>
</reference>
<sequence length="148" mass="17110">MRLPVLPVHMKYPLFDVSVGQPTVTGEVTQSLRHDRPQFRRHHHAEHASQADGLGHGAAARNSFHHDGGRHGHATRIHENNRRPHKRNRRRHLRKGHLKAHRAESHLYGYLLRNQKACGEKLKICLPASKHPRFQVVLHPRCNKKQPT</sequence>
<dbReference type="EMBL" id="U46933">
    <property type="protein sequence ID" value="AAC54922.1"/>
    <property type="molecule type" value="Genomic_DNA"/>
</dbReference>
<dbReference type="RefSeq" id="NP_043896.1">
    <property type="nucleotide sequence ID" value="NC_001720.1"/>
</dbReference>
<dbReference type="KEGG" id="vg:1733459"/>
<dbReference type="Proteomes" id="UP000001594">
    <property type="component" value="Segment"/>
</dbReference>
<keyword id="KW-1185">Reference proteome</keyword>
<accession>Q64766</accession>
<gene>
    <name type="ORF">5</name>
</gene>
<feature type="chain" id="PRO_0000339004" description="Uncharacterized protein ORF5">
    <location>
        <begin position="1"/>
        <end position="148"/>
    </location>
</feature>
<feature type="region of interest" description="Disordered" evidence="1">
    <location>
        <begin position="38"/>
        <end position="99"/>
    </location>
</feature>
<feature type="compositionally biased region" description="Basic and acidic residues" evidence="1">
    <location>
        <begin position="64"/>
        <end position="82"/>
    </location>
</feature>
<feature type="compositionally biased region" description="Basic residues" evidence="1">
    <location>
        <begin position="83"/>
        <end position="99"/>
    </location>
</feature>
<protein>
    <recommendedName>
        <fullName>Uncharacterized protein ORF5</fullName>
    </recommendedName>
</protein>
<proteinExistence type="predicted"/>
<name>YO5_ADEG1</name>
<organismHost>
    <name type="scientific">Galliformes</name>
    <dbReference type="NCBI Taxonomy" id="8976"/>
</organismHost>